<accession>O74804</accession>
<name>EST1_SCHPO</name>
<organism>
    <name type="scientific">Schizosaccharomyces pombe (strain 972 / ATCC 24843)</name>
    <name type="common">Fission yeast</name>
    <dbReference type="NCBI Taxonomy" id="284812"/>
    <lineage>
        <taxon>Eukaryota</taxon>
        <taxon>Fungi</taxon>
        <taxon>Dikarya</taxon>
        <taxon>Ascomycota</taxon>
        <taxon>Taphrinomycotina</taxon>
        <taxon>Schizosaccharomycetes</taxon>
        <taxon>Schizosaccharomycetales</taxon>
        <taxon>Schizosaccharomycetaceae</taxon>
        <taxon>Schizosaccharomyces</taxon>
    </lineage>
</organism>
<gene>
    <name type="primary">est1</name>
    <name type="ORF">SPBC2D10.13</name>
</gene>
<keyword id="KW-0158">Chromosome</keyword>
<keyword id="KW-0238">DNA-binding</keyword>
<keyword id="KW-0539">Nucleus</keyword>
<keyword id="KW-1185">Reference proteome</keyword>
<keyword id="KW-0779">Telomere</keyword>
<dbReference type="EMBL" id="CU329671">
    <property type="protein sequence ID" value="CAA21171.1"/>
    <property type="molecule type" value="Genomic_DNA"/>
</dbReference>
<dbReference type="PIR" id="T40116">
    <property type="entry name" value="T40116"/>
</dbReference>
<dbReference type="RefSeq" id="NP_596232.1">
    <property type="nucleotide sequence ID" value="NM_001022152.2"/>
</dbReference>
<dbReference type="SMR" id="O74804"/>
<dbReference type="BioGRID" id="277020">
    <property type="interactions" value="45"/>
</dbReference>
<dbReference type="DIP" id="DIP-38464N"/>
<dbReference type="FunCoup" id="O74804">
    <property type="interactions" value="2"/>
</dbReference>
<dbReference type="IntAct" id="O74804">
    <property type="interactions" value="2"/>
</dbReference>
<dbReference type="STRING" id="284812.O74804"/>
<dbReference type="PaxDb" id="4896-SPBC2D10.13.1"/>
<dbReference type="EnsemblFungi" id="SPBC2D10.13.1">
    <property type="protein sequence ID" value="SPBC2D10.13.1:pep"/>
    <property type="gene ID" value="SPBC2D10.13"/>
</dbReference>
<dbReference type="GeneID" id="2540492"/>
<dbReference type="KEGG" id="spo:2540492"/>
<dbReference type="PomBase" id="SPBC2D10.13">
    <property type="gene designation" value="est1"/>
</dbReference>
<dbReference type="VEuPathDB" id="FungiDB:SPBC2D10.13"/>
<dbReference type="eggNOG" id="KOG2162">
    <property type="taxonomic scope" value="Eukaryota"/>
</dbReference>
<dbReference type="HOGENOM" id="CLU_553374_0_0_1"/>
<dbReference type="InParanoid" id="O74804"/>
<dbReference type="OMA" id="VYWFSIA"/>
<dbReference type="PRO" id="PR:O74804"/>
<dbReference type="Proteomes" id="UP000002485">
    <property type="component" value="Chromosome II"/>
</dbReference>
<dbReference type="GO" id="GO:0140445">
    <property type="term" value="C:chromosome, telomeric repeat region"/>
    <property type="evidence" value="ECO:0000314"/>
    <property type="project" value="PomBase"/>
</dbReference>
<dbReference type="GO" id="GO:0034399">
    <property type="term" value="C:nuclear periphery"/>
    <property type="evidence" value="ECO:0000314"/>
    <property type="project" value="PomBase"/>
</dbReference>
<dbReference type="GO" id="GO:0005634">
    <property type="term" value="C:nucleus"/>
    <property type="evidence" value="ECO:0007005"/>
    <property type="project" value="PomBase"/>
</dbReference>
<dbReference type="GO" id="GO:0005697">
    <property type="term" value="C:telomerase holoenzyme complex"/>
    <property type="evidence" value="ECO:0000353"/>
    <property type="project" value="PomBase"/>
</dbReference>
<dbReference type="GO" id="GO:0008047">
    <property type="term" value="F:enzyme activator activity"/>
    <property type="evidence" value="ECO:0000269"/>
    <property type="project" value="PomBase"/>
</dbReference>
<dbReference type="GO" id="GO:0043047">
    <property type="term" value="F:single-stranded telomeric DNA binding"/>
    <property type="evidence" value="ECO:0000266"/>
    <property type="project" value="PomBase"/>
</dbReference>
<dbReference type="GO" id="GO:0070034">
    <property type="term" value="F:telomerase RNA binding"/>
    <property type="evidence" value="ECO:0000353"/>
    <property type="project" value="PomBase"/>
</dbReference>
<dbReference type="GO" id="GO:0007004">
    <property type="term" value="P:telomere maintenance via telomerase"/>
    <property type="evidence" value="ECO:0000314"/>
    <property type="project" value="PomBase"/>
</dbReference>
<dbReference type="GO" id="GO:1905324">
    <property type="term" value="P:telomere-telomerase complex assembly"/>
    <property type="evidence" value="ECO:0000315"/>
    <property type="project" value="PomBase"/>
</dbReference>
<dbReference type="Gene3D" id="1.25.40.10">
    <property type="entry name" value="Tetratricopeptide repeat domain"/>
    <property type="match status" value="1"/>
</dbReference>
<dbReference type="InterPro" id="IPR018834">
    <property type="entry name" value="DNA/RNA-bd_Est1-type"/>
</dbReference>
<dbReference type="InterPro" id="IPR019458">
    <property type="entry name" value="Est1-like_N"/>
</dbReference>
<dbReference type="InterPro" id="IPR045153">
    <property type="entry name" value="Est1/Ebs1-like"/>
</dbReference>
<dbReference type="InterPro" id="IPR011990">
    <property type="entry name" value="TPR-like_helical_dom_sf"/>
</dbReference>
<dbReference type="PANTHER" id="PTHR15696">
    <property type="entry name" value="SMG-7 SUPPRESSOR WITH MORPHOLOGICAL EFFECT ON GENITALIA PROTEIN 7"/>
    <property type="match status" value="1"/>
</dbReference>
<dbReference type="PANTHER" id="PTHR15696:SF0">
    <property type="entry name" value="TELOMERASE-BINDING PROTEIN EST1A"/>
    <property type="match status" value="1"/>
</dbReference>
<dbReference type="Pfam" id="PF10374">
    <property type="entry name" value="EST1"/>
    <property type="match status" value="1"/>
</dbReference>
<dbReference type="Pfam" id="PF10373">
    <property type="entry name" value="EST1_DNA_bind"/>
    <property type="match status" value="1"/>
</dbReference>
<dbReference type="SUPFAM" id="SSF48452">
    <property type="entry name" value="TPR-like"/>
    <property type="match status" value="1"/>
</dbReference>
<comment type="function">
    <text evidence="1">Directly involved in telomere replication. Associates with telomerase and during its interaction with trt1, telomerase activity is promoted.</text>
</comment>
<comment type="subunit">
    <text evidence="1">Interacts with trt1.</text>
</comment>
<comment type="interaction">
    <interactant intactId="EBI-1556899">
        <id>O74804</id>
    </interactant>
    <interactant intactId="EBI-15953947">
        <id>Q10432</id>
        <label>ccq1</label>
    </interactant>
    <organismsDiffer>false</organismsDiffer>
    <experiments>4</experiments>
</comment>
<comment type="interaction">
    <interactant intactId="EBI-1556899">
        <id>O74804</id>
    </interactant>
    <interactant intactId="EBI-1556874">
        <id>O13339</id>
        <label>trt1</label>
    </interactant>
    <organismsDiffer>false</organismsDiffer>
    <experiments>3</experiments>
</comment>
<comment type="subcellular location">
    <subcellularLocation>
        <location evidence="1">Nucleus</location>
    </subcellularLocation>
    <subcellularLocation>
        <location evidence="3">Chromosome</location>
        <location evidence="3">Telomere</location>
    </subcellularLocation>
</comment>
<comment type="similarity">
    <text evidence="2">Belongs to the EST1 family.</text>
</comment>
<reference key="1">
    <citation type="journal article" date="2002" name="Nature">
        <title>The genome sequence of Schizosaccharomyces pombe.</title>
        <authorList>
            <person name="Wood V."/>
            <person name="Gwilliam R."/>
            <person name="Rajandream M.A."/>
            <person name="Lyne M.H."/>
            <person name="Lyne R."/>
            <person name="Stewart A."/>
            <person name="Sgouros J.G."/>
            <person name="Peat N."/>
            <person name="Hayles J."/>
            <person name="Baker S.G."/>
            <person name="Basham D."/>
            <person name="Bowman S."/>
            <person name="Brooks K."/>
            <person name="Brown D."/>
            <person name="Brown S."/>
            <person name="Chillingworth T."/>
            <person name="Churcher C.M."/>
            <person name="Collins M."/>
            <person name="Connor R."/>
            <person name="Cronin A."/>
            <person name="Davis P."/>
            <person name="Feltwell T."/>
            <person name="Fraser A."/>
            <person name="Gentles S."/>
            <person name="Goble A."/>
            <person name="Hamlin N."/>
            <person name="Harris D.E."/>
            <person name="Hidalgo J."/>
            <person name="Hodgson G."/>
            <person name="Holroyd S."/>
            <person name="Hornsby T."/>
            <person name="Howarth S."/>
            <person name="Huckle E.J."/>
            <person name="Hunt S."/>
            <person name="Jagels K."/>
            <person name="James K.D."/>
            <person name="Jones L."/>
            <person name="Jones M."/>
            <person name="Leather S."/>
            <person name="McDonald S."/>
            <person name="McLean J."/>
            <person name="Mooney P."/>
            <person name="Moule S."/>
            <person name="Mungall K.L."/>
            <person name="Murphy L.D."/>
            <person name="Niblett D."/>
            <person name="Odell C."/>
            <person name="Oliver K."/>
            <person name="O'Neil S."/>
            <person name="Pearson D."/>
            <person name="Quail M.A."/>
            <person name="Rabbinowitsch E."/>
            <person name="Rutherford K.M."/>
            <person name="Rutter S."/>
            <person name="Saunders D."/>
            <person name="Seeger K."/>
            <person name="Sharp S."/>
            <person name="Skelton J."/>
            <person name="Simmonds M.N."/>
            <person name="Squares R."/>
            <person name="Squares S."/>
            <person name="Stevens K."/>
            <person name="Taylor K."/>
            <person name="Taylor R.G."/>
            <person name="Tivey A."/>
            <person name="Walsh S.V."/>
            <person name="Warren T."/>
            <person name="Whitehead S."/>
            <person name="Woodward J.R."/>
            <person name="Volckaert G."/>
            <person name="Aert R."/>
            <person name="Robben J."/>
            <person name="Grymonprez B."/>
            <person name="Weltjens I."/>
            <person name="Vanstreels E."/>
            <person name="Rieger M."/>
            <person name="Schaefer M."/>
            <person name="Mueller-Auer S."/>
            <person name="Gabel C."/>
            <person name="Fuchs M."/>
            <person name="Duesterhoeft A."/>
            <person name="Fritzc C."/>
            <person name="Holzer E."/>
            <person name="Moestl D."/>
            <person name="Hilbert H."/>
            <person name="Borzym K."/>
            <person name="Langer I."/>
            <person name="Beck A."/>
            <person name="Lehrach H."/>
            <person name="Reinhardt R."/>
            <person name="Pohl T.M."/>
            <person name="Eger P."/>
            <person name="Zimmermann W."/>
            <person name="Wedler H."/>
            <person name="Wambutt R."/>
            <person name="Purnelle B."/>
            <person name="Goffeau A."/>
            <person name="Cadieu E."/>
            <person name="Dreano S."/>
            <person name="Gloux S."/>
            <person name="Lelaure V."/>
            <person name="Mottier S."/>
            <person name="Galibert F."/>
            <person name="Aves S.J."/>
            <person name="Xiang Z."/>
            <person name="Hunt C."/>
            <person name="Moore K."/>
            <person name="Hurst S.M."/>
            <person name="Lucas M."/>
            <person name="Rochet M."/>
            <person name="Gaillardin C."/>
            <person name="Tallada V.A."/>
            <person name="Garzon A."/>
            <person name="Thode G."/>
            <person name="Daga R.R."/>
            <person name="Cruzado L."/>
            <person name="Jimenez J."/>
            <person name="Sanchez M."/>
            <person name="del Rey F."/>
            <person name="Benito J."/>
            <person name="Dominguez A."/>
            <person name="Revuelta J.L."/>
            <person name="Moreno S."/>
            <person name="Armstrong J."/>
            <person name="Forsburg S.L."/>
            <person name="Cerutti L."/>
            <person name="Lowe T."/>
            <person name="McCombie W.R."/>
            <person name="Paulsen I."/>
            <person name="Potashkin J."/>
            <person name="Shpakovski G.V."/>
            <person name="Ussery D."/>
            <person name="Barrell B.G."/>
            <person name="Nurse P."/>
        </authorList>
    </citation>
    <scope>NUCLEOTIDE SEQUENCE [LARGE SCALE GENOMIC DNA]</scope>
    <source>
        <strain>972 / ATCC 24843</strain>
    </source>
</reference>
<reference key="2">
    <citation type="journal article" date="2003" name="Curr. Biol.">
        <title>Telomere maintenance in fission yeast requires an Est1 ortholog.</title>
        <authorList>
            <person name="Beernink H.T.H."/>
            <person name="Miller K."/>
            <person name="Deshpande A."/>
            <person name="Bucher P."/>
            <person name="Cooper J.P."/>
        </authorList>
    </citation>
    <scope>FUNCTION</scope>
    <scope>INTERACTION WITH TRT1</scope>
    <scope>SUBCELLULAR LOCATION</scope>
</reference>
<feature type="chain" id="PRO_0000087071" description="Telomere elongation protein est1">
    <location>
        <begin position="1"/>
        <end position="490"/>
    </location>
</feature>
<sequence length="490" mass="57268">MSQQLSSNEICEEQGKLVKALCEAAQGGFKHDLYEKIIAIEIEVEKKLLNRLKSIQTNTFERPDIIWSCCHYKIIQHFRSRFREIHPRHVVEKKKTKKVFFKFLKTCAIFYQTCISELISKFQLDSYRPFFCKWTSSATVSSTISNDEMSSIPEASYSRNHMEALECVYNCFIYLGDMARYSSTCLKKRGAYDRALGFYDLAHRTLPGNGMHRNQIAVVWASDECIVESIYWFSSALCSEDPPKSALLNLLKQLIAFYRRCFAVHFEFVSPMMILLFIISDCCIHSLKEIQPFKCPSIMVKDLENSLLQSNIRNVGYEKKNLYYISSAFSNLLHCRYFNCNDRLRSFYYRFSSWLFHQTLACAKEVESERAPTSYLTSCLPSIKVILARVLESSPAFGFIERNELEQLSYHFRICEKFFKESSENKMLNLFEDYNEFGLCKSFICLFKRLNEDIIGPKLNINPPDYTTHPFSESIKRFYQISKILNLLLS</sequence>
<evidence type="ECO:0000269" key="1">
    <source>
    </source>
</evidence>
<evidence type="ECO:0000305" key="2"/>
<evidence type="ECO:0000305" key="3">
    <source>
    </source>
</evidence>
<proteinExistence type="evidence at protein level"/>
<protein>
    <recommendedName>
        <fullName>Telomere elongation protein est1</fullName>
    </recommendedName>
    <alternativeName>
        <fullName>Ever shorter telomeres protein 1</fullName>
    </alternativeName>
</protein>